<gene>
    <name type="primary">AKR1C4</name>
    <name type="synonym">CHDR</name>
</gene>
<accession>P17516</accession>
<accession>Q5T6A3</accession>
<accession>Q8WW84</accession>
<accession>Q9NS54</accession>
<keyword id="KW-0002">3D-structure</keyword>
<keyword id="KW-0963">Cytoplasm</keyword>
<keyword id="KW-0903">Direct protein sequencing</keyword>
<keyword id="KW-0443">Lipid metabolism</keyword>
<keyword id="KW-0521">NADP</keyword>
<keyword id="KW-0560">Oxidoreductase</keyword>
<keyword id="KW-1267">Proteomics identification</keyword>
<keyword id="KW-1185">Reference proteome</keyword>
<organism>
    <name type="scientific">Homo sapiens</name>
    <name type="common">Human</name>
    <dbReference type="NCBI Taxonomy" id="9606"/>
    <lineage>
        <taxon>Eukaryota</taxon>
        <taxon>Metazoa</taxon>
        <taxon>Chordata</taxon>
        <taxon>Craniata</taxon>
        <taxon>Vertebrata</taxon>
        <taxon>Euteleostomi</taxon>
        <taxon>Mammalia</taxon>
        <taxon>Eutheria</taxon>
        <taxon>Euarchontoglires</taxon>
        <taxon>Primates</taxon>
        <taxon>Haplorrhini</taxon>
        <taxon>Catarrhini</taxon>
        <taxon>Hominidae</taxon>
        <taxon>Homo</taxon>
    </lineage>
</organism>
<evidence type="ECO:0000250" key="1"/>
<evidence type="ECO:0000250" key="2">
    <source>
        <dbReference type="UniProtKB" id="P14550"/>
    </source>
</evidence>
<evidence type="ECO:0000250" key="3">
    <source>
        <dbReference type="UniProtKB" id="Q04828"/>
    </source>
</evidence>
<evidence type="ECO:0000269" key="4">
    <source>
    </source>
</evidence>
<evidence type="ECO:0000269" key="5">
    <source>
    </source>
</evidence>
<evidence type="ECO:0000269" key="6">
    <source>
    </source>
</evidence>
<evidence type="ECO:0000269" key="7">
    <source>
    </source>
</evidence>
<evidence type="ECO:0000269" key="8">
    <source>
    </source>
</evidence>
<evidence type="ECO:0000269" key="9">
    <source>
    </source>
</evidence>
<evidence type="ECO:0000269" key="10">
    <source>
    </source>
</evidence>
<evidence type="ECO:0000269" key="11">
    <source>
    </source>
</evidence>
<evidence type="ECO:0000269" key="12">
    <source>
    </source>
</evidence>
<evidence type="ECO:0000269" key="13">
    <source>
    </source>
</evidence>
<evidence type="ECO:0000269" key="14">
    <source>
    </source>
</evidence>
<evidence type="ECO:0000269" key="15">
    <source>
    </source>
</evidence>
<evidence type="ECO:0000269" key="16">
    <source>
    </source>
</evidence>
<evidence type="ECO:0000269" key="17">
    <source>
    </source>
</evidence>
<evidence type="ECO:0000269" key="18">
    <source>
    </source>
</evidence>
<evidence type="ECO:0000269" key="19">
    <source ref="18"/>
</evidence>
<evidence type="ECO:0000303" key="20">
    <source>
    </source>
</evidence>
<evidence type="ECO:0000303" key="21">
    <source>
    </source>
</evidence>
<evidence type="ECO:0000303" key="22">
    <source>
    </source>
</evidence>
<evidence type="ECO:0000305" key="23"/>
<evidence type="ECO:0000305" key="24">
    <source>
    </source>
</evidence>
<evidence type="ECO:0000305" key="25">
    <source>
    </source>
</evidence>
<evidence type="ECO:0000305" key="26">
    <source>
    </source>
</evidence>
<evidence type="ECO:0007829" key="27">
    <source>
        <dbReference type="PDB" id="2FVL"/>
    </source>
</evidence>
<sequence>MDPKYQRVELNDGHFMPVLGFGTYAPPEVPRNRAVEVTKLAIEAGFRHIDSAYLYNNEEQVGLAIRSKIADGSVKREDIFYTSKLWCTFFQPQMVQPALESSLKKLQLDYVDLYLLHFPMALKPGETPLPKDENGKVIFDTVDLSATWEVMEKCKDAGLAKSIGVSNFNCRQLEMILNKPGLKYKPVCNQVECHPYLNQSKLLDFCKSKDIVLVAHSALGTQRHKLWVDPNSPVLLEDPVLCALAKKHKQTPALIALRYQLQRGVVVLAKSYNEQRIRENIQVFEFQLTSEDMKVLDGLNRNYRYVVMDFLMDHPDYPFSDEY</sequence>
<protein>
    <recommendedName>
        <fullName>Aldo-keto reductase family 1 member C4</fullName>
        <ecNumber evidence="4 6 7 8 11 14 16 17">1.1.1.-</ecNumber>
        <ecNumber evidence="6 16">1.1.1.209</ecNumber>
        <ecNumber evidence="8">1.1.1.210</ecNumber>
        <ecNumber evidence="6">1.1.1.51</ecNumber>
        <ecNumber evidence="6 8">1.1.1.53</ecNumber>
        <ecNumber evidence="6">1.1.1.62</ecNumber>
    </recommendedName>
    <alternativeName>
        <fullName evidence="20 22">3-alpha-hydroxysteroid dehydrogenase type I</fullName>
        <shortName evidence="20">3-alpha-HSD1</shortName>
        <ecNumber evidence="4 6 7 8 11 16 17">1.1.1.357</ecNumber>
    </alternativeName>
    <alternativeName>
        <fullName>3alpha-hydroxysteroid 3-dehydrogenase</fullName>
    </alternativeName>
    <alternativeName>
        <fullName evidence="21">Chlordecone reductase</fullName>
        <shortName>CDR</shortName>
        <ecNumber evidence="14">1.1.1.225</ecNumber>
    </alternativeName>
    <alternativeName>
        <fullName>Dihydrodiol dehydrogenase 4</fullName>
        <shortName>DD-4</shortName>
        <shortName>DD4</shortName>
    </alternativeName>
    <alternativeName>
        <fullName>HAKRA</fullName>
    </alternativeName>
</protein>
<feature type="chain" id="PRO_0000124640" description="Aldo-keto reductase family 1 member C4">
    <location>
        <begin position="1"/>
        <end position="323"/>
    </location>
</feature>
<feature type="active site" description="Proton donor" evidence="1">
    <location>
        <position position="55"/>
    </location>
</feature>
<feature type="binding site" evidence="19">
    <location>
        <begin position="20"/>
        <end position="24"/>
    </location>
    <ligand>
        <name>NADP(+)</name>
        <dbReference type="ChEBI" id="CHEBI:58349"/>
    </ligand>
</feature>
<feature type="binding site" evidence="19">
    <location>
        <position position="50"/>
    </location>
    <ligand>
        <name>NADP(+)</name>
        <dbReference type="ChEBI" id="CHEBI:58349"/>
    </ligand>
</feature>
<feature type="binding site" evidence="1">
    <location>
        <position position="117"/>
    </location>
    <ligand>
        <name>substrate</name>
    </ligand>
</feature>
<feature type="binding site" evidence="19">
    <location>
        <begin position="166"/>
        <end position="167"/>
    </location>
    <ligand>
        <name>NADP(+)</name>
        <dbReference type="ChEBI" id="CHEBI:58349"/>
    </ligand>
</feature>
<feature type="binding site" evidence="19">
    <location>
        <position position="190"/>
    </location>
    <ligand>
        <name>NADP(+)</name>
        <dbReference type="ChEBI" id="CHEBI:58349"/>
    </ligand>
</feature>
<feature type="binding site" evidence="19">
    <location>
        <begin position="216"/>
        <end position="221"/>
    </location>
    <ligand>
        <name>NADP(+)</name>
        <dbReference type="ChEBI" id="CHEBI:58349"/>
    </ligand>
</feature>
<feature type="binding site" evidence="19">
    <location>
        <begin position="270"/>
        <end position="280"/>
    </location>
    <ligand>
        <name>NADP(+)</name>
        <dbReference type="ChEBI" id="CHEBI:58349"/>
    </ligand>
</feature>
<feature type="site" description="Important for substrate specificity" evidence="1">
    <location>
        <position position="54"/>
    </location>
</feature>
<feature type="site" description="Lowers pKa of active site Tyr" evidence="2">
    <location>
        <position position="84"/>
    </location>
</feature>
<feature type="sequence variant" id="VAR_028240" description="In dbSNP:rs11253043.">
    <original>G</original>
    <variation>E</variation>
    <location>
        <position position="135"/>
    </location>
</feature>
<feature type="sequence variant" id="VAR_013290" description="In dbSNP:rs3829125." evidence="4">
    <original>S</original>
    <variation>C</variation>
    <location>
        <position position="145"/>
    </location>
</feature>
<feature type="sequence variant" id="VAR_028241" description="In dbSNP:rs17851824." evidence="10">
    <original>C</original>
    <variation>Y</variation>
    <location>
        <position position="170"/>
    </location>
</feature>
<feature type="sequence variant" id="VAR_028242" description="In dbSNP:rs4880718." evidence="4 5 7 10 13 15 16 17 18">
    <original>Q</original>
    <variation>R</variation>
    <location>
        <position position="250"/>
    </location>
</feature>
<feature type="sequence variant" id="VAR_013291" description="In dbSNP:rs17134592." evidence="4">
    <original>L</original>
    <variation>V</variation>
    <location>
        <position position="311"/>
    </location>
</feature>
<feature type="helix" evidence="27">
    <location>
        <begin position="3"/>
        <end position="5"/>
    </location>
</feature>
<feature type="strand" evidence="27">
    <location>
        <begin position="7"/>
        <end position="9"/>
    </location>
</feature>
<feature type="strand" evidence="27">
    <location>
        <begin position="15"/>
        <end position="22"/>
    </location>
</feature>
<feature type="helix" evidence="27">
    <location>
        <begin position="33"/>
        <end position="44"/>
    </location>
</feature>
<feature type="strand" evidence="27">
    <location>
        <begin position="48"/>
        <end position="50"/>
    </location>
</feature>
<feature type="helix" evidence="27">
    <location>
        <begin position="53"/>
        <end position="55"/>
    </location>
</feature>
<feature type="helix" evidence="27">
    <location>
        <begin position="58"/>
        <end position="71"/>
    </location>
</feature>
<feature type="helix" evidence="27">
    <location>
        <begin position="76"/>
        <end position="78"/>
    </location>
</feature>
<feature type="strand" evidence="27">
    <location>
        <begin position="80"/>
        <end position="85"/>
    </location>
</feature>
<feature type="helix" evidence="27">
    <location>
        <begin position="87"/>
        <end position="89"/>
    </location>
</feature>
<feature type="helix" evidence="27">
    <location>
        <begin position="92"/>
        <end position="106"/>
    </location>
</feature>
<feature type="strand" evidence="27">
    <location>
        <begin position="111"/>
        <end position="117"/>
    </location>
</feature>
<feature type="strand" evidence="27">
    <location>
        <begin position="124"/>
        <end position="126"/>
    </location>
</feature>
<feature type="helix" evidence="27">
    <location>
        <begin position="144"/>
        <end position="156"/>
    </location>
</feature>
<feature type="strand" evidence="27">
    <location>
        <begin position="159"/>
        <end position="167"/>
    </location>
</feature>
<feature type="helix" evidence="27">
    <location>
        <begin position="170"/>
        <end position="177"/>
    </location>
</feature>
<feature type="strand" evidence="27">
    <location>
        <begin position="187"/>
        <end position="192"/>
    </location>
</feature>
<feature type="helix" evidence="27">
    <location>
        <begin position="200"/>
        <end position="208"/>
    </location>
</feature>
<feature type="strand" evidence="27">
    <location>
        <begin position="212"/>
        <end position="217"/>
    </location>
</feature>
<feature type="turn" evidence="27">
    <location>
        <begin position="225"/>
        <end position="227"/>
    </location>
</feature>
<feature type="helix" evidence="27">
    <location>
        <begin position="235"/>
        <end position="237"/>
    </location>
</feature>
<feature type="helix" evidence="27">
    <location>
        <begin position="239"/>
        <end position="247"/>
    </location>
</feature>
<feature type="helix" evidence="27">
    <location>
        <begin position="252"/>
        <end position="262"/>
    </location>
</feature>
<feature type="strand" evidence="27">
    <location>
        <begin position="266"/>
        <end position="270"/>
    </location>
</feature>
<feature type="helix" evidence="27">
    <location>
        <begin position="274"/>
        <end position="280"/>
    </location>
</feature>
<feature type="helix" evidence="27">
    <location>
        <begin position="281"/>
        <end position="285"/>
    </location>
</feature>
<feature type="helix" evidence="27">
    <location>
        <begin position="290"/>
        <end position="297"/>
    </location>
</feature>
<feature type="helix" evidence="27">
    <location>
        <begin position="309"/>
        <end position="311"/>
    </location>
</feature>
<feature type="strand" evidence="27">
    <location>
        <begin position="318"/>
        <end position="321"/>
    </location>
</feature>
<proteinExistence type="evidence at protein level"/>
<name>AK1C4_HUMAN</name>
<dbReference type="EC" id="1.1.1.-" evidence="4 6 7 8 11 14 16 17"/>
<dbReference type="EC" id="1.1.1.209" evidence="6 16"/>
<dbReference type="EC" id="1.1.1.210" evidence="8"/>
<dbReference type="EC" id="1.1.1.51" evidence="6"/>
<dbReference type="EC" id="1.1.1.53" evidence="6 8"/>
<dbReference type="EC" id="1.1.1.62" evidence="6"/>
<dbReference type="EC" id="1.1.1.357" evidence="4 6 7 8 11 16 17"/>
<dbReference type="EC" id="1.1.1.225" evidence="14"/>
<dbReference type="EMBL" id="S68287">
    <property type="protein sequence ID" value="AAD14010.1"/>
    <property type="molecule type" value="mRNA"/>
</dbReference>
<dbReference type="EMBL" id="AB045829">
    <property type="protein sequence ID" value="BAA99542.1"/>
    <property type="molecule type" value="mRNA"/>
</dbReference>
<dbReference type="EMBL" id="AB031085">
    <property type="protein sequence ID" value="BAA92885.1"/>
    <property type="molecule type" value="mRNA"/>
</dbReference>
<dbReference type="EMBL" id="AB032163">
    <property type="protein sequence ID" value="BAA92893.1"/>
    <property type="molecule type" value="Genomic_DNA"/>
</dbReference>
<dbReference type="EMBL" id="AL355303">
    <property type="status" value="NOT_ANNOTATED_CDS"/>
    <property type="molecule type" value="Genomic_DNA"/>
</dbReference>
<dbReference type="EMBL" id="BC020744">
    <property type="protein sequence ID" value="AAH20744.1"/>
    <property type="molecule type" value="mRNA"/>
</dbReference>
<dbReference type="EMBL" id="M33375">
    <property type="protein sequence ID" value="AAA35658.1"/>
    <property type="status" value="ALT_INIT"/>
    <property type="molecule type" value="mRNA"/>
</dbReference>
<dbReference type="EMBL" id="D26125">
    <property type="protein sequence ID" value="BAA05122.1"/>
    <property type="molecule type" value="mRNA"/>
</dbReference>
<dbReference type="CCDS" id="CCDS7064.1"/>
<dbReference type="PIR" id="A57407">
    <property type="entry name" value="A57407"/>
</dbReference>
<dbReference type="PIR" id="S59620">
    <property type="entry name" value="S59620"/>
</dbReference>
<dbReference type="RefSeq" id="NP_001809.3">
    <property type="nucleotide sequence ID" value="NM_001818.3"/>
</dbReference>
<dbReference type="PDB" id="2FVL">
    <property type="method" value="X-ray"/>
    <property type="resolution" value="2.40 A"/>
    <property type="chains" value="A/B/C=1-323"/>
</dbReference>
<dbReference type="PDBsum" id="2FVL"/>
<dbReference type="SMR" id="P17516"/>
<dbReference type="BioGRID" id="107534">
    <property type="interactions" value="7"/>
</dbReference>
<dbReference type="FunCoup" id="P17516">
    <property type="interactions" value="179"/>
</dbReference>
<dbReference type="IntAct" id="P17516">
    <property type="interactions" value="3"/>
</dbReference>
<dbReference type="STRING" id="9606.ENSP00000369814"/>
<dbReference type="BindingDB" id="P17516"/>
<dbReference type="ChEMBL" id="CHEMBL4999"/>
<dbReference type="DrugBank" id="DB00997">
    <property type="generic name" value="Doxorubicin"/>
</dbReference>
<dbReference type="DrugBank" id="DB13751">
    <property type="generic name" value="Glycyrrhizic acid"/>
</dbReference>
<dbReference type="DrugBank" id="DB06077">
    <property type="generic name" value="Lumateperone"/>
</dbReference>
<dbReference type="DrugBank" id="DB00959">
    <property type="generic name" value="Methylprednisolone"/>
</dbReference>
<dbReference type="DrugBank" id="DB00461">
    <property type="generic name" value="Nabumetone"/>
</dbReference>
<dbReference type="DrugBank" id="DB00157">
    <property type="generic name" value="NADH"/>
</dbReference>
<dbReference type="DrugBank" id="DB00717">
    <property type="generic name" value="Norethisterone"/>
</dbReference>
<dbReference type="DrugBank" id="DB00776">
    <property type="generic name" value="Oxcarbazepine"/>
</dbReference>
<dbReference type="DrugCentral" id="P17516"/>
<dbReference type="SwissLipids" id="SLP:000000805"/>
<dbReference type="iPTMnet" id="P17516"/>
<dbReference type="PhosphoSitePlus" id="P17516"/>
<dbReference type="SwissPalm" id="P17516"/>
<dbReference type="BioMuta" id="AKR1C4"/>
<dbReference type="DMDM" id="308153631"/>
<dbReference type="jPOST" id="P17516"/>
<dbReference type="MassIVE" id="P17516"/>
<dbReference type="PaxDb" id="9606-ENSP00000369814"/>
<dbReference type="PeptideAtlas" id="P17516"/>
<dbReference type="ProteomicsDB" id="53480"/>
<dbReference type="Antibodypedia" id="24066">
    <property type="antibodies" value="291 antibodies from 36 providers"/>
</dbReference>
<dbReference type="DNASU" id="1109"/>
<dbReference type="Ensembl" id="ENST00000263126.3">
    <property type="protein sequence ID" value="ENSP00000263126.1"/>
    <property type="gene ID" value="ENSG00000198610.11"/>
</dbReference>
<dbReference type="Ensembl" id="ENST00000380448.5">
    <property type="protein sequence ID" value="ENSP00000369814.1"/>
    <property type="gene ID" value="ENSG00000198610.11"/>
</dbReference>
<dbReference type="GeneID" id="1109"/>
<dbReference type="KEGG" id="hsa:1109"/>
<dbReference type="MANE-Select" id="ENST00000263126.3">
    <property type="protein sequence ID" value="ENSP00000263126.1"/>
    <property type="RefSeq nucleotide sequence ID" value="NM_001818.5"/>
    <property type="RefSeq protein sequence ID" value="NP_001809.4"/>
</dbReference>
<dbReference type="UCSC" id="uc001ihw.2">
    <property type="organism name" value="human"/>
</dbReference>
<dbReference type="AGR" id="HGNC:387"/>
<dbReference type="CTD" id="1109"/>
<dbReference type="DisGeNET" id="1109"/>
<dbReference type="GeneCards" id="AKR1C4"/>
<dbReference type="HGNC" id="HGNC:387">
    <property type="gene designation" value="AKR1C4"/>
</dbReference>
<dbReference type="HPA" id="ENSG00000198610">
    <property type="expression patterns" value="Tissue enriched (liver)"/>
</dbReference>
<dbReference type="MalaCards" id="AKR1C4"/>
<dbReference type="MIM" id="600451">
    <property type="type" value="gene"/>
</dbReference>
<dbReference type="MIM" id="614279">
    <property type="type" value="phenotype"/>
</dbReference>
<dbReference type="neXtProt" id="NX_P17516"/>
<dbReference type="OpenTargets" id="ENSG00000198610"/>
<dbReference type="Orphanet" id="443087">
    <property type="disease" value="46,XY difference of sex development due to testicular 17,20-desmolase deficiency"/>
</dbReference>
<dbReference type="PharmGKB" id="PA24680"/>
<dbReference type="VEuPathDB" id="HostDB:ENSG00000198610"/>
<dbReference type="eggNOG" id="KOG1577">
    <property type="taxonomic scope" value="Eukaryota"/>
</dbReference>
<dbReference type="GeneTree" id="ENSGT00940000163771"/>
<dbReference type="HOGENOM" id="CLU_023205_0_0_1"/>
<dbReference type="InParanoid" id="P17516"/>
<dbReference type="OMA" id="SNFTCTK"/>
<dbReference type="OrthoDB" id="416253at2759"/>
<dbReference type="PAN-GO" id="P17516">
    <property type="GO annotations" value="9 GO annotations based on evolutionary models"/>
</dbReference>
<dbReference type="PhylomeDB" id="P17516"/>
<dbReference type="TreeFam" id="TF106492"/>
<dbReference type="BioCyc" id="MetaCyc:HS10739-MONOMER"/>
<dbReference type="BRENDA" id="1.1.1.357">
    <property type="organism ID" value="2681"/>
</dbReference>
<dbReference type="PathwayCommons" id="P17516"/>
<dbReference type="Reactome" id="R-HSA-193368">
    <property type="pathway name" value="Synthesis of bile acids and bile salts via 7alpha-hydroxycholesterol"/>
</dbReference>
<dbReference type="Reactome" id="R-HSA-193775">
    <property type="pathway name" value="Synthesis of bile acids and bile salts via 24-hydroxycholesterol"/>
</dbReference>
<dbReference type="Reactome" id="R-HSA-193807">
    <property type="pathway name" value="Synthesis of bile acids and bile salts via 27-hydroxycholesterol"/>
</dbReference>
<dbReference type="Reactome" id="R-HSA-975634">
    <property type="pathway name" value="Retinoid metabolism and transport"/>
</dbReference>
<dbReference type="SABIO-RK" id="P17516"/>
<dbReference type="SignaLink" id="P17516"/>
<dbReference type="SIGNOR" id="P17516"/>
<dbReference type="BioGRID-ORCS" id="1109">
    <property type="hits" value="8 hits in 1111 CRISPR screens"/>
</dbReference>
<dbReference type="CD-CODE" id="91857CE7">
    <property type="entry name" value="Nucleolus"/>
</dbReference>
<dbReference type="ChiTaRS" id="AKR1C4">
    <property type="organism name" value="human"/>
</dbReference>
<dbReference type="EvolutionaryTrace" id="P17516"/>
<dbReference type="GeneWiki" id="3-alpha-HSD"/>
<dbReference type="GenomeRNAi" id="1109"/>
<dbReference type="Pharos" id="P17516">
    <property type="development level" value="Tchem"/>
</dbReference>
<dbReference type="PRO" id="PR:P17516"/>
<dbReference type="Proteomes" id="UP000005640">
    <property type="component" value="Chromosome 10"/>
</dbReference>
<dbReference type="RNAct" id="P17516">
    <property type="molecule type" value="protein"/>
</dbReference>
<dbReference type="Bgee" id="ENSG00000198610">
    <property type="expression patterns" value="Expressed in right lobe of liver and 51 other cell types or tissues"/>
</dbReference>
<dbReference type="GO" id="GO:0005737">
    <property type="term" value="C:cytoplasm"/>
    <property type="evidence" value="ECO:0000304"/>
    <property type="project" value="ProtInc"/>
</dbReference>
<dbReference type="GO" id="GO:0005829">
    <property type="term" value="C:cytosol"/>
    <property type="evidence" value="ECO:0000318"/>
    <property type="project" value="GO_Central"/>
</dbReference>
<dbReference type="GO" id="GO:0070062">
    <property type="term" value="C:extracellular exosome"/>
    <property type="evidence" value="ECO:0007005"/>
    <property type="project" value="UniProtKB"/>
</dbReference>
<dbReference type="GO" id="GO:0047024">
    <property type="term" value="F:5-alpha-androstane-3-beta,17-beta-diol dehydrogenase (NADP+) activity"/>
    <property type="evidence" value="ECO:0007669"/>
    <property type="project" value="UniProtKB-EC"/>
</dbReference>
<dbReference type="GO" id="GO:0004033">
    <property type="term" value="F:aldo-keto reductase (NADPH) activity"/>
    <property type="evidence" value="ECO:0000304"/>
    <property type="project" value="Reactome"/>
</dbReference>
<dbReference type="GO" id="GO:0004032">
    <property type="term" value="F:aldose reductase (NADPH) activity"/>
    <property type="evidence" value="ECO:0000318"/>
    <property type="project" value="GO_Central"/>
</dbReference>
<dbReference type="GO" id="GO:0047044">
    <property type="term" value="F:androstan-3-alpha,17-beta-diol dehydrogenase (NAD+) activity"/>
    <property type="evidence" value="ECO:0007669"/>
    <property type="project" value="UniProtKB-EC"/>
</dbReference>
<dbReference type="GO" id="GO:0047023">
    <property type="term" value="F:androsterone dehydrogenase [NAD(P)+] activity"/>
    <property type="evidence" value="ECO:0000314"/>
    <property type="project" value="UniProtKB"/>
</dbReference>
<dbReference type="GO" id="GO:0032052">
    <property type="term" value="F:bile acid binding"/>
    <property type="evidence" value="ECO:0000318"/>
    <property type="project" value="GO_Central"/>
</dbReference>
<dbReference type="GO" id="GO:0015125">
    <property type="term" value="F:bile acid transmembrane transporter activity"/>
    <property type="evidence" value="ECO:0000304"/>
    <property type="project" value="ProtInc"/>
</dbReference>
<dbReference type="GO" id="GO:0047743">
    <property type="term" value="F:chlordecone reductase activity"/>
    <property type="evidence" value="ECO:0000314"/>
    <property type="project" value="UniProtKB"/>
</dbReference>
<dbReference type="GO" id="GO:0009055">
    <property type="term" value="F:electron transfer activity"/>
    <property type="evidence" value="ECO:0000304"/>
    <property type="project" value="UniProtKB"/>
</dbReference>
<dbReference type="GO" id="GO:0004303">
    <property type="term" value="F:estradiol 17-beta-dehydrogenase [NAD(P)+] activity"/>
    <property type="evidence" value="ECO:0007669"/>
    <property type="project" value="UniProtKB-EC"/>
</dbReference>
<dbReference type="GO" id="GO:0047086">
    <property type="term" value="F:ketosteroid monooxygenase activity"/>
    <property type="evidence" value="ECO:0000318"/>
    <property type="project" value="GO_Central"/>
</dbReference>
<dbReference type="GO" id="GO:0016655">
    <property type="term" value="F:oxidoreductase activity, acting on NAD(P)H, quinone or similar compound as acceptor"/>
    <property type="evidence" value="ECO:0000314"/>
    <property type="project" value="UniProtKB"/>
</dbReference>
<dbReference type="GO" id="GO:0001758">
    <property type="term" value="F:retinal dehydrogenase activity"/>
    <property type="evidence" value="ECO:0000314"/>
    <property type="project" value="UniProtKB"/>
</dbReference>
<dbReference type="GO" id="GO:0047045">
    <property type="term" value="F:testosterone 17-beta-dehydrogenase (NADP+) activity"/>
    <property type="evidence" value="ECO:0007669"/>
    <property type="project" value="RHEA"/>
</dbReference>
<dbReference type="GO" id="GO:0047035">
    <property type="term" value="F:testosterone dehydrogenase (NAD+) activity"/>
    <property type="evidence" value="ECO:0007669"/>
    <property type="project" value="RHEA"/>
</dbReference>
<dbReference type="GO" id="GO:0008209">
    <property type="term" value="P:androgen metabolic process"/>
    <property type="evidence" value="ECO:0000304"/>
    <property type="project" value="ProtInc"/>
</dbReference>
<dbReference type="GO" id="GO:0015721">
    <property type="term" value="P:bile acid and bile salt transport"/>
    <property type="evidence" value="ECO:0000304"/>
    <property type="project" value="ProtInc"/>
</dbReference>
<dbReference type="GO" id="GO:0006699">
    <property type="term" value="P:bile acid biosynthetic process"/>
    <property type="evidence" value="ECO:0000304"/>
    <property type="project" value="Reactome"/>
</dbReference>
<dbReference type="GO" id="GO:0071395">
    <property type="term" value="P:cellular response to jasmonic acid stimulus"/>
    <property type="evidence" value="ECO:0000314"/>
    <property type="project" value="UniProtKB"/>
</dbReference>
<dbReference type="GO" id="GO:0044597">
    <property type="term" value="P:daunorubicin metabolic process"/>
    <property type="evidence" value="ECO:0000315"/>
    <property type="project" value="UniProtKB"/>
</dbReference>
<dbReference type="GO" id="GO:0044598">
    <property type="term" value="P:doxorubicin metabolic process"/>
    <property type="evidence" value="ECO:0000315"/>
    <property type="project" value="UniProtKB"/>
</dbReference>
<dbReference type="GO" id="GO:0042448">
    <property type="term" value="P:progesterone metabolic process"/>
    <property type="evidence" value="ECO:0000318"/>
    <property type="project" value="GO_Central"/>
</dbReference>
<dbReference type="GO" id="GO:0006693">
    <property type="term" value="P:prostaglandin metabolic process"/>
    <property type="evidence" value="ECO:0000318"/>
    <property type="project" value="GO_Central"/>
</dbReference>
<dbReference type="GO" id="GO:0001523">
    <property type="term" value="P:retinoid metabolic process"/>
    <property type="evidence" value="ECO:0000304"/>
    <property type="project" value="Reactome"/>
</dbReference>
<dbReference type="GO" id="GO:0008202">
    <property type="term" value="P:steroid metabolic process"/>
    <property type="evidence" value="ECO:0000304"/>
    <property type="project" value="ProtInc"/>
</dbReference>
<dbReference type="CDD" id="cd19108">
    <property type="entry name" value="AKR_AKR1C1-35"/>
    <property type="match status" value="1"/>
</dbReference>
<dbReference type="FunFam" id="3.20.20.100:FF:000003">
    <property type="entry name" value="Aldo-keto reductase family 1 member C3"/>
    <property type="match status" value="1"/>
</dbReference>
<dbReference type="Gene3D" id="3.20.20.100">
    <property type="entry name" value="NADP-dependent oxidoreductase domain"/>
    <property type="match status" value="1"/>
</dbReference>
<dbReference type="InterPro" id="IPR020471">
    <property type="entry name" value="AKR"/>
</dbReference>
<dbReference type="InterPro" id="IPR044482">
    <property type="entry name" value="AKR1C"/>
</dbReference>
<dbReference type="InterPro" id="IPR018170">
    <property type="entry name" value="Aldo/ket_reductase_CS"/>
</dbReference>
<dbReference type="InterPro" id="IPR023210">
    <property type="entry name" value="NADP_OxRdtase_dom"/>
</dbReference>
<dbReference type="InterPro" id="IPR036812">
    <property type="entry name" value="NADP_OxRdtase_dom_sf"/>
</dbReference>
<dbReference type="PANTHER" id="PTHR11732">
    <property type="entry name" value="ALDO/KETO REDUCTASE"/>
    <property type="match status" value="1"/>
</dbReference>
<dbReference type="Pfam" id="PF00248">
    <property type="entry name" value="Aldo_ket_red"/>
    <property type="match status" value="1"/>
</dbReference>
<dbReference type="PIRSF" id="PIRSF000097">
    <property type="entry name" value="AKR"/>
    <property type="match status" value="1"/>
</dbReference>
<dbReference type="PRINTS" id="PR00069">
    <property type="entry name" value="ALDKETRDTASE"/>
</dbReference>
<dbReference type="SUPFAM" id="SSF51430">
    <property type="entry name" value="NAD(P)-linked oxidoreductase"/>
    <property type="match status" value="1"/>
</dbReference>
<dbReference type="PROSITE" id="PS00798">
    <property type="entry name" value="ALDOKETO_REDUCTASE_1"/>
    <property type="match status" value="1"/>
</dbReference>
<dbReference type="PROSITE" id="PS00062">
    <property type="entry name" value="ALDOKETO_REDUCTASE_2"/>
    <property type="match status" value="1"/>
</dbReference>
<dbReference type="PROSITE" id="PS00063">
    <property type="entry name" value="ALDOKETO_REDUCTASE_3"/>
    <property type="match status" value="1"/>
</dbReference>
<reference key="1">
    <citation type="journal article" date="1993" name="J. Steroid Biochem. Mol. Biol.">
        <title>Molecular cloning of multiple cDNAs encoding human enzymes structurally related to 3 alpha-hydroxysteroid dehydrogenase.</title>
        <authorList>
            <person name="Qin K.-N."/>
            <person name="New M.I."/>
            <person name="Cheng K.-C."/>
        </authorList>
    </citation>
    <scope>NUCLEOTIDE SEQUENCE [MRNA]</scope>
    <scope>VARIANT ARG-250</scope>
    <source>
        <tissue>Liver</tissue>
    </source>
</reference>
<reference key="2">
    <citation type="journal article" date="1995" name="J. Biol. Chem.">
        <title>Substrate specificity, gene structure, and tissue-specific distribution of multiple human 3 alpha-hydroxysteroid dehydrogenases.</title>
        <authorList>
            <person name="Khanna M."/>
            <person name="Qin K.-N."/>
            <person name="Wang R.W."/>
            <person name="Cheng K.-C."/>
        </authorList>
    </citation>
    <scope>NUCLEOTIDE SEQUENCE [GENOMIC DNA]</scope>
    <scope>TISSUE SPECIFICITY</scope>
    <scope>VARIANT ARG-250</scope>
    <scope>CATALYTIC ACTIVITY</scope>
    <scope>FUNCTION</scope>
</reference>
<reference key="3">
    <citation type="journal article" date="1995" name="J. Steroid Biochem. Mol. Biol.">
        <title>Distribution of 3 alpha-hydroxysteroid dehydrogenase in rat brain and molecular cloning of multiple cDNAs encoding structurally related proteins in humans.</title>
        <authorList>
            <person name="Khanna M."/>
            <person name="Qin K.-N."/>
            <person name="Cheng K.-C."/>
        </authorList>
    </citation>
    <scope>NUCLEOTIDE SEQUENCE [MRNA]</scope>
    <scope>VARIANT ARG-250</scope>
</reference>
<reference key="4">
    <citation type="journal article" date="1999" name="Pharmacogenetics">
        <title>Characterization of a novel variant (S145C/L311V) of 3alpha-hydroxysteroid/dihydrodiol dehydrogenase in human liver.</title>
        <authorList>
            <person name="Kume T."/>
            <person name="Iwasa H."/>
            <person name="Shiraishi H."/>
            <person name="Yokoi T."/>
            <person name="Nagashima K."/>
            <person name="Otsuka M."/>
            <person name="Terada T."/>
            <person name="Takagi T."/>
            <person name="Hara A."/>
            <person name="Kamataki T."/>
        </authorList>
    </citation>
    <scope>NUCLEOTIDE SEQUENCE [MRNA]</scope>
    <scope>VARIANTS CYS-145; ARG-250 AND VAL-311</scope>
    <scope>CATALYTIC ACTIVITY</scope>
    <scope>FUNCTION</scope>
    <source>
        <tissue>Liver</tissue>
    </source>
</reference>
<reference key="5">
    <citation type="journal article" date="2000" name="Genes Cells">
        <title>Close kinship of human 20alpha-hydroxysteroid dehydrogenase gene with three aldo-keto reductase genes.</title>
        <authorList>
            <person name="Nishizawa M."/>
            <person name="Nakajima T."/>
            <person name="Yasuda K."/>
            <person name="Kanzaki H."/>
            <person name="Sasaguri Y."/>
            <person name="Watanabe K."/>
            <person name="Ito S."/>
        </authorList>
    </citation>
    <scope>NUCLEOTIDE SEQUENCE [GENOMIC DNA / MRNA]</scope>
    <scope>VARIANT ARG-250</scope>
    <source>
        <tissue>Liver</tissue>
    </source>
</reference>
<reference key="6">
    <citation type="journal article" date="2001" name="J. Clin. Endocrinol. Metab.">
        <title>Human types 1 and 3 3 alpha-hydroxysteroid dehydrogenases: differential lability and tissue distribution.</title>
        <authorList>
            <person name="Dufort I."/>
            <person name="Labrie F."/>
            <person name="Luu-The V."/>
        </authorList>
    </citation>
    <scope>NUCLEOTIDE SEQUENCE [MRNA]</scope>
    <scope>FUNCTION</scope>
    <scope>CATALYTIC ACTIVITY</scope>
    <scope>TISSUE SPECIFICITY</scope>
    <scope>VARIANT ARG-250</scope>
    <scope>BIOPHYSICOCHEMICAL PROPERTIES</scope>
    <source>
        <tissue>Liver</tissue>
    </source>
</reference>
<reference key="7">
    <citation type="journal article" date="2004" name="Nature">
        <title>The DNA sequence and comparative analysis of human chromosome 10.</title>
        <authorList>
            <person name="Deloukas P."/>
            <person name="Earthrowl M.E."/>
            <person name="Grafham D.V."/>
            <person name="Rubenfield M."/>
            <person name="French L."/>
            <person name="Steward C.A."/>
            <person name="Sims S.K."/>
            <person name="Jones M.C."/>
            <person name="Searle S."/>
            <person name="Scott C."/>
            <person name="Howe K."/>
            <person name="Hunt S.E."/>
            <person name="Andrews T.D."/>
            <person name="Gilbert J.G.R."/>
            <person name="Swarbreck D."/>
            <person name="Ashurst J.L."/>
            <person name="Taylor A."/>
            <person name="Battles J."/>
            <person name="Bird C.P."/>
            <person name="Ainscough R."/>
            <person name="Almeida J.P."/>
            <person name="Ashwell R.I.S."/>
            <person name="Ambrose K.D."/>
            <person name="Babbage A.K."/>
            <person name="Bagguley C.L."/>
            <person name="Bailey J."/>
            <person name="Banerjee R."/>
            <person name="Bates K."/>
            <person name="Beasley H."/>
            <person name="Bray-Allen S."/>
            <person name="Brown A.J."/>
            <person name="Brown J.Y."/>
            <person name="Burford D.C."/>
            <person name="Burrill W."/>
            <person name="Burton J."/>
            <person name="Cahill P."/>
            <person name="Camire D."/>
            <person name="Carter N.P."/>
            <person name="Chapman J.C."/>
            <person name="Clark S.Y."/>
            <person name="Clarke G."/>
            <person name="Clee C.M."/>
            <person name="Clegg S."/>
            <person name="Corby N."/>
            <person name="Coulson A."/>
            <person name="Dhami P."/>
            <person name="Dutta I."/>
            <person name="Dunn M."/>
            <person name="Faulkner L."/>
            <person name="Frankish A."/>
            <person name="Frankland J.A."/>
            <person name="Garner P."/>
            <person name="Garnett J."/>
            <person name="Gribble S."/>
            <person name="Griffiths C."/>
            <person name="Grocock R."/>
            <person name="Gustafson E."/>
            <person name="Hammond S."/>
            <person name="Harley J.L."/>
            <person name="Hart E."/>
            <person name="Heath P.D."/>
            <person name="Ho T.P."/>
            <person name="Hopkins B."/>
            <person name="Horne J."/>
            <person name="Howden P.J."/>
            <person name="Huckle E."/>
            <person name="Hynds C."/>
            <person name="Johnson C."/>
            <person name="Johnson D."/>
            <person name="Kana A."/>
            <person name="Kay M."/>
            <person name="Kimberley A.M."/>
            <person name="Kershaw J.K."/>
            <person name="Kokkinaki M."/>
            <person name="Laird G.K."/>
            <person name="Lawlor S."/>
            <person name="Lee H.M."/>
            <person name="Leongamornlert D.A."/>
            <person name="Laird G."/>
            <person name="Lloyd C."/>
            <person name="Lloyd D.M."/>
            <person name="Loveland J."/>
            <person name="Lovell J."/>
            <person name="McLaren S."/>
            <person name="McLay K.E."/>
            <person name="McMurray A."/>
            <person name="Mashreghi-Mohammadi M."/>
            <person name="Matthews L."/>
            <person name="Milne S."/>
            <person name="Nickerson T."/>
            <person name="Nguyen M."/>
            <person name="Overton-Larty E."/>
            <person name="Palmer S.A."/>
            <person name="Pearce A.V."/>
            <person name="Peck A.I."/>
            <person name="Pelan S."/>
            <person name="Phillimore B."/>
            <person name="Porter K."/>
            <person name="Rice C.M."/>
            <person name="Rogosin A."/>
            <person name="Ross M.T."/>
            <person name="Sarafidou T."/>
            <person name="Sehra H.K."/>
            <person name="Shownkeen R."/>
            <person name="Skuce C.D."/>
            <person name="Smith M."/>
            <person name="Standring L."/>
            <person name="Sycamore N."/>
            <person name="Tester J."/>
            <person name="Thorpe A."/>
            <person name="Torcasso W."/>
            <person name="Tracey A."/>
            <person name="Tromans A."/>
            <person name="Tsolas J."/>
            <person name="Wall M."/>
            <person name="Walsh J."/>
            <person name="Wang H."/>
            <person name="Weinstock K."/>
            <person name="West A.P."/>
            <person name="Willey D.L."/>
            <person name="Whitehead S.L."/>
            <person name="Wilming L."/>
            <person name="Wray P.W."/>
            <person name="Young L."/>
            <person name="Chen Y."/>
            <person name="Lovering R.C."/>
            <person name="Moschonas N.K."/>
            <person name="Siebert R."/>
            <person name="Fechtel K."/>
            <person name="Bentley D."/>
            <person name="Durbin R.M."/>
            <person name="Hubbard T."/>
            <person name="Doucette-Stamm L."/>
            <person name="Beck S."/>
            <person name="Smith D.R."/>
            <person name="Rogers J."/>
        </authorList>
    </citation>
    <scope>NUCLEOTIDE SEQUENCE [LARGE SCALE GENOMIC DNA]</scope>
</reference>
<reference key="8">
    <citation type="journal article" date="2004" name="Genome Res.">
        <title>The status, quality, and expansion of the NIH full-length cDNA project: the Mammalian Gene Collection (MGC).</title>
        <authorList>
            <consortium name="The MGC Project Team"/>
        </authorList>
    </citation>
    <scope>NUCLEOTIDE SEQUENCE [LARGE SCALE MRNA]</scope>
    <scope>VARIANTS TYR-170 AND ARG-250</scope>
    <source>
        <tissue>Liver</tissue>
    </source>
</reference>
<reference key="9">
    <citation type="journal article" date="1990" name="Biochemistry">
        <title>Isolation and characterization of cloned cDNAs encoding human liver chlordecone reductase.</title>
        <authorList>
            <person name="Winters C.J."/>
            <person name="Molowa D.T."/>
            <person name="Guzelian P.S."/>
        </authorList>
    </citation>
    <scope>NUCLEOTIDE SEQUENCE [MRNA] OF 2-323</scope>
    <scope>VARIANT ARG-250</scope>
    <source>
        <tissue>Liver</tissue>
    </source>
</reference>
<reference key="10">
    <citation type="journal article" date="1994" name="Biochem. J.">
        <title>Molecular cloning of two human liver 3 alpha-hydroxysteroid/dihydrodiol dehydrogenase isoenzymes that are identical with chlordecone reductase and bile-acid binder.</title>
        <authorList>
            <person name="Deyashiki Y."/>
            <person name="Ogasawara A."/>
            <person name="Nakayama T."/>
            <person name="Nakanishi M."/>
            <person name="Miyabe Y."/>
            <person name="Sato K."/>
            <person name="Hara A."/>
        </authorList>
    </citation>
    <scope>NUCLEOTIDE SEQUENCE [MRNA] OF 3-323</scope>
    <scope>PROTEIN SEQUENCE OF 5-29; 76-131; 184-201 AND 271-294</scope>
    <scope>VARIANT ARG-250</scope>
    <source>
        <tissue>Liver</tissue>
    </source>
</reference>
<reference key="11">
    <citation type="journal article" date="1992" name="Biochem. Biophys. Res. Commun.">
        <title>Human hepatic 3 alpha-hydroxysteroid dehydrogenase: possible identity with human hepatic chlordecone reductase.</title>
        <authorList>
            <person name="Binstock J.M."/>
            <person name="Iyer R.B."/>
            <person name="Hamby C.V."/>
            <person name="Fried V.A."/>
            <person name="Schwartz I.S."/>
            <person name="Weinstein B.I."/>
            <person name="Southren A.L."/>
        </authorList>
    </citation>
    <scope>PROTEIN SEQUENCE OF 40-54; 105-121; 162-175; 184-196; 277-291 AND 307-321</scope>
    <scope>FUNCTION</scope>
    <scope>CATALYTIC ACTIVITY</scope>
</reference>
<reference key="12">
    <citation type="journal article" date="1986" name="J. Biol. Chem.">
        <title>Purification and characterization of chlordecone reductase from human liver.</title>
        <authorList>
            <person name="Molowa D.T."/>
            <person name="Shayne A.G."/>
            <person name="Guzelian P.S."/>
        </authorList>
    </citation>
    <scope>FUNCTION</scope>
    <scope>CATALYTIC ACTIVITY</scope>
</reference>
<reference key="13">
    <citation type="journal article" date="2000" name="Biochem. J.">
        <title>Human 3alpha-hydroxysteroid dehydrogenase isoforms (AKR1C1-AKR1C4) of the aldo-keto reductase superfamily: functional plasticity and tissue distribution reveals roles in the inactivation and formation of male and female sex hormones.</title>
        <authorList>
            <person name="Penning T.M."/>
            <person name="Burczynski M.E."/>
            <person name="Jez J.M."/>
            <person name="Hung C.F."/>
            <person name="Lin H.K."/>
            <person name="Ma H."/>
            <person name="Moore M."/>
            <person name="Palackal N."/>
            <person name="Ratnam K."/>
        </authorList>
    </citation>
    <scope>CATALYTIC ACTIVITY</scope>
    <scope>FUNCTION</scope>
    <scope>TISSUE SPECIFICITY</scope>
    <scope>BIOPHYSICOCHEMICAL PROPERTIES</scope>
    <scope>SUBSTRATE SPECIFICITY</scope>
</reference>
<reference key="14">
    <citation type="journal article" date="2004" name="J. Biol. Chem.">
        <title>Human cytosolic 3alpha-hydroxysteroid dehydrogenases of the aldo-keto reductase superfamily display significant 3beta-hydroxysteroid dehydrogenase activity: implications for steroid hormone metabolism and action.</title>
        <authorList>
            <person name="Steckelbroeck S."/>
            <person name="Jin Y."/>
            <person name="Gopishetty S."/>
            <person name="Oyesanmi B."/>
            <person name="Penning T.M."/>
        </authorList>
    </citation>
    <scope>CATALYTIC ACTIVITY</scope>
    <scope>FUNCTION</scope>
    <scope>ACTIVITY REGULATION</scope>
</reference>
<reference key="15">
    <citation type="journal article" date="2009" name="J. Biol. Chem.">
        <title>Human cytosolic hydroxysteroid dehydrogenases of the aldo-ketoreductase superfamily catalyze reduction of conjugated steroids: implications for phase I and phase II steroid hormone metabolism.</title>
        <authorList>
            <person name="Jin Y."/>
            <person name="Duan L."/>
            <person name="Lee S.H."/>
            <person name="Kloosterboer H.J."/>
            <person name="Blair I.A."/>
            <person name="Penning T.M."/>
        </authorList>
    </citation>
    <scope>CATALYTIC ACTIVITY</scope>
    <scope>FUNCTION</scope>
    <scope>BIOPHYSICOCHEMICAL PROPERTIES</scope>
</reference>
<reference key="16">
    <citation type="journal article" date="2011" name="Am. J. Hum. Genet.">
        <title>Why boys will be boys: two pathways of fetal testicular androgen biosynthesis are needed for male sexual differentiation.</title>
        <authorList>
            <person name="Fluck C.E."/>
            <person name="Meyer-Boni M."/>
            <person name="Pandey A.V."/>
            <person name="Kempna P."/>
            <person name="Miller W.L."/>
            <person name="Schoenle E.J."/>
            <person name="Biason-Lauber A."/>
        </authorList>
    </citation>
    <scope>INVOLVEMENT IN SRXY8</scope>
</reference>
<reference key="17">
    <citation type="journal article" date="2014" name="J. Proteomics">
        <title>An enzyme assisted RP-RPLC approach for in-depth analysis of human liver phosphoproteome.</title>
        <authorList>
            <person name="Bian Y."/>
            <person name="Song C."/>
            <person name="Cheng K."/>
            <person name="Dong M."/>
            <person name="Wang F."/>
            <person name="Huang J."/>
            <person name="Sun D."/>
            <person name="Wang L."/>
            <person name="Ye M."/>
            <person name="Zou H."/>
        </authorList>
    </citation>
    <scope>IDENTIFICATION BY MASS SPECTROMETRY [LARGE SCALE ANALYSIS]</scope>
    <source>
        <tissue>Liver</tissue>
    </source>
</reference>
<reference key="18">
    <citation type="submission" date="2006-02" db="PDB data bank">
        <title>Crystal structure of human 3-alpha hydroxysteroid/dihydrodiol dehydrogenase (AKR1C4) complexed with NADP+.</title>
        <authorList>
            <consortium name="Structural genomics consortium (SGC)"/>
        </authorList>
    </citation>
    <scope>X-RAY CRYSTALLOGRAPHY (2.4 ANGSTROMS) IN COMPLEX WITH NADP</scope>
</reference>
<comment type="function">
    <text evidence="4 6 7 8 9 11 14 16">Cytosolic aldo-keto reductase that catalyzes the NADH and NADPH-dependent reduction of ketosteroids to hydroxysteroids. Liver specific enzyme that acts as an NAD(P)(H)-dependent 3-, 17- and 20-ketosteroid reductase on the steroid nucleus and side chain (PubMed:10634139, PubMed:10998348, PubMed:11158055, PubMed:14672942, PubMed:1530633, PubMed:19218247, PubMed:7650035). Displays the ability to catalyze both oxidation and reduction in vitro, but most probably acts as a reductase in vivo since the oxidase activity measured in vitro is inhibited by physiological concentration of NADPH (PubMed:14672942). Acts preferentially as a 3-alpha-hydroxysteroid dehydrogenase (HSD) with a subsidiary 3-beta-HSD activity (PubMed:14672942). Catalyzes efficiently the transformation of the potent androgen 5-alpha-dihydrotestosterone (5alpha-DHT or 17beta-hydroxy-5alpha-androstan-3-one) into the less active form, 5-alpha-androstan-3-alpha,17-beta-diol (3-alpha-diol) (PubMed:10998348, PubMed:11158055, PubMed:14672942). Catalyzes the reduction of estrone into 17beta-estradiol but with low efficiency (PubMed:14672942). Metabolizes a broad spectrum of natural and synthetic therapeutic steroid and plays an important role in metabolism of androgens, estrogens, progestereone and conjugated steroids (PubMed:10998348, PubMed:14672942, PubMed:19218247). Catalyzes the biotransformation of the pesticide chlordecone (kepone) to its corresponding alcohol leading to increased biliary excretion of the pesticide and concomitant reduction of its neurotoxicity since bile is the major excretory route (PubMed:2427522).</text>
</comment>
<comment type="catalytic activity">
    <reaction evidence="4 6 7 8 11 16 17">
        <text>a 3alpha-hydroxysteroid + NADP(+) = a 3-oxosteroid + NADPH + H(+)</text>
        <dbReference type="Rhea" id="RHEA:34783"/>
        <dbReference type="ChEBI" id="CHEBI:15378"/>
        <dbReference type="ChEBI" id="CHEBI:36835"/>
        <dbReference type="ChEBI" id="CHEBI:47788"/>
        <dbReference type="ChEBI" id="CHEBI:57783"/>
        <dbReference type="ChEBI" id="CHEBI:58349"/>
        <dbReference type="EC" id="1.1.1.357"/>
    </reaction>
</comment>
<comment type="catalytic activity">
    <reaction evidence="4 6 7 8 11 16 17">
        <text>a 3alpha-hydroxysteroid + NAD(+) = a 3-oxosteroid + NADH + H(+)</text>
        <dbReference type="Rhea" id="RHEA:34779"/>
        <dbReference type="ChEBI" id="CHEBI:15378"/>
        <dbReference type="ChEBI" id="CHEBI:36835"/>
        <dbReference type="ChEBI" id="CHEBI:47788"/>
        <dbReference type="ChEBI" id="CHEBI:57540"/>
        <dbReference type="ChEBI" id="CHEBI:57945"/>
        <dbReference type="EC" id="1.1.1.357"/>
    </reaction>
</comment>
<comment type="catalytic activity">
    <reaction evidence="6 7 8 11">
        <text>5alpha-androstane-3alpha,17beta-diol + NADP(+) = 17beta-hydroxy-5alpha-androstan-3-one + NADPH + H(+)</text>
        <dbReference type="Rhea" id="RHEA:42116"/>
        <dbReference type="ChEBI" id="CHEBI:15378"/>
        <dbReference type="ChEBI" id="CHEBI:16330"/>
        <dbReference type="ChEBI" id="CHEBI:36713"/>
        <dbReference type="ChEBI" id="CHEBI:57783"/>
        <dbReference type="ChEBI" id="CHEBI:58349"/>
    </reaction>
    <physiologicalReaction direction="right-to-left" evidence="24 25 26">
        <dbReference type="Rhea" id="RHEA:42118"/>
    </physiologicalReaction>
</comment>
<comment type="catalytic activity">
    <reaction evidence="8">
        <text>5alpha-androstane-3beta,17beta-diol + NADP(+) = 17beta-hydroxy-5alpha-androstan-3-one + NADPH + H(+)</text>
        <dbReference type="Rhea" id="RHEA:16297"/>
        <dbReference type="ChEBI" id="CHEBI:15378"/>
        <dbReference type="ChEBI" id="CHEBI:16330"/>
        <dbReference type="ChEBI" id="CHEBI:18329"/>
        <dbReference type="ChEBI" id="CHEBI:57783"/>
        <dbReference type="ChEBI" id="CHEBI:58349"/>
        <dbReference type="EC" id="1.1.1.210"/>
    </reaction>
    <physiologicalReaction direction="right-to-left" evidence="25">
        <dbReference type="Rhea" id="RHEA:16299"/>
    </physiologicalReaction>
</comment>
<comment type="catalytic activity">
    <reaction evidence="6 8">
        <text>5alpha-androstane-3alpha,17beta-diol + NAD(+) = 17beta-hydroxy-5alpha-androstan-3-one + NADH + H(+)</text>
        <dbReference type="Rhea" id="RHEA:42004"/>
        <dbReference type="ChEBI" id="CHEBI:15378"/>
        <dbReference type="ChEBI" id="CHEBI:16330"/>
        <dbReference type="ChEBI" id="CHEBI:36713"/>
        <dbReference type="ChEBI" id="CHEBI:57540"/>
        <dbReference type="ChEBI" id="CHEBI:57945"/>
        <dbReference type="EC" id="1.1.1.53"/>
    </reaction>
    <physiologicalReaction direction="left-to-right" evidence="25">
        <dbReference type="Rhea" id="RHEA:42005"/>
    </physiologicalReaction>
    <physiologicalReaction direction="right-to-left" evidence="24">
        <dbReference type="Rhea" id="RHEA:42006"/>
    </physiologicalReaction>
</comment>
<comment type="catalytic activity">
    <reaction evidence="6">
        <text>17beta-estradiol + NADP(+) = estrone + NADPH + H(+)</text>
        <dbReference type="Rhea" id="RHEA:24616"/>
        <dbReference type="ChEBI" id="CHEBI:15378"/>
        <dbReference type="ChEBI" id="CHEBI:16469"/>
        <dbReference type="ChEBI" id="CHEBI:17263"/>
        <dbReference type="ChEBI" id="CHEBI:57783"/>
        <dbReference type="ChEBI" id="CHEBI:58349"/>
        <dbReference type="EC" id="1.1.1.62"/>
    </reaction>
    <physiologicalReaction direction="left-to-right" evidence="24">
        <dbReference type="Rhea" id="RHEA:24617"/>
    </physiologicalReaction>
    <physiologicalReaction direction="right-to-left" evidence="24">
        <dbReference type="Rhea" id="RHEA:24618"/>
    </physiologicalReaction>
</comment>
<comment type="catalytic activity">
    <reaction evidence="6">
        <text>17beta-estradiol + NAD(+) = estrone + NADH + H(+)</text>
        <dbReference type="Rhea" id="RHEA:24612"/>
        <dbReference type="ChEBI" id="CHEBI:15378"/>
        <dbReference type="ChEBI" id="CHEBI:16469"/>
        <dbReference type="ChEBI" id="CHEBI:17263"/>
        <dbReference type="ChEBI" id="CHEBI:57540"/>
        <dbReference type="ChEBI" id="CHEBI:57945"/>
        <dbReference type="EC" id="1.1.1.62"/>
    </reaction>
    <physiologicalReaction direction="left-to-right" evidence="24">
        <dbReference type="Rhea" id="RHEA:24613"/>
    </physiologicalReaction>
    <physiologicalReaction direction="right-to-left" evidence="24">
        <dbReference type="Rhea" id="RHEA:24614"/>
    </physiologicalReaction>
</comment>
<comment type="catalytic activity">
    <reaction evidence="6 7">
        <text>(20S)-hydroxypregn-4-en-3-one + NADP(+) = progesterone + NADPH + H(+)</text>
        <dbReference type="Rhea" id="RHEA:42112"/>
        <dbReference type="ChEBI" id="CHEBI:15378"/>
        <dbReference type="ChEBI" id="CHEBI:17026"/>
        <dbReference type="ChEBI" id="CHEBI:28453"/>
        <dbReference type="ChEBI" id="CHEBI:57783"/>
        <dbReference type="ChEBI" id="CHEBI:58349"/>
    </reaction>
    <physiologicalReaction direction="left-to-right" evidence="24">
        <dbReference type="Rhea" id="RHEA:42113"/>
    </physiologicalReaction>
    <physiologicalReaction direction="right-to-left" evidence="7 24">
        <dbReference type="Rhea" id="RHEA:42114"/>
    </physiologicalReaction>
</comment>
<comment type="catalytic activity">
    <reaction evidence="6">
        <text>(20S)-hydroxypregn-4-en-3-one + NAD(+) = progesterone + NADH + H(+)</text>
        <dbReference type="Rhea" id="RHEA:42108"/>
        <dbReference type="ChEBI" id="CHEBI:15378"/>
        <dbReference type="ChEBI" id="CHEBI:17026"/>
        <dbReference type="ChEBI" id="CHEBI:28453"/>
        <dbReference type="ChEBI" id="CHEBI:57540"/>
        <dbReference type="ChEBI" id="CHEBI:57945"/>
    </reaction>
    <physiologicalReaction direction="left-to-right" evidence="24">
        <dbReference type="Rhea" id="RHEA:42109"/>
    </physiologicalReaction>
    <physiologicalReaction direction="right-to-left" evidence="24">
        <dbReference type="Rhea" id="RHEA:42110"/>
    </physiologicalReaction>
</comment>
<comment type="catalytic activity">
    <reaction evidence="6 16">
        <text>androsterone + NADP(+) = 5alpha-androstan-3,17-dione + NADPH + H(+)</text>
        <dbReference type="Rhea" id="RHEA:20377"/>
        <dbReference type="ChEBI" id="CHEBI:15378"/>
        <dbReference type="ChEBI" id="CHEBI:15994"/>
        <dbReference type="ChEBI" id="CHEBI:16032"/>
        <dbReference type="ChEBI" id="CHEBI:57783"/>
        <dbReference type="ChEBI" id="CHEBI:58349"/>
        <dbReference type="EC" id="1.1.1.209"/>
    </reaction>
    <physiologicalReaction direction="left-to-right" evidence="24">
        <dbReference type="Rhea" id="RHEA:20378"/>
    </physiologicalReaction>
</comment>
<comment type="catalytic activity">
    <reaction evidence="6">
        <text>testosterone + NADP(+) = androst-4-ene-3,17-dione + NADPH + H(+)</text>
        <dbReference type="Rhea" id="RHEA:14981"/>
        <dbReference type="ChEBI" id="CHEBI:15378"/>
        <dbReference type="ChEBI" id="CHEBI:16422"/>
        <dbReference type="ChEBI" id="CHEBI:17347"/>
        <dbReference type="ChEBI" id="CHEBI:57783"/>
        <dbReference type="ChEBI" id="CHEBI:58349"/>
        <dbReference type="EC" id="1.1.1.51"/>
    </reaction>
    <physiologicalReaction direction="left-to-right" evidence="24">
        <dbReference type="Rhea" id="RHEA:14982"/>
    </physiologicalReaction>
</comment>
<comment type="catalytic activity">
    <reaction evidence="6">
        <text>testosterone + NAD(+) = androst-4-ene-3,17-dione + NADH + H(+)</text>
        <dbReference type="Rhea" id="RHEA:14929"/>
        <dbReference type="ChEBI" id="CHEBI:15378"/>
        <dbReference type="ChEBI" id="CHEBI:16422"/>
        <dbReference type="ChEBI" id="CHEBI:17347"/>
        <dbReference type="ChEBI" id="CHEBI:57540"/>
        <dbReference type="ChEBI" id="CHEBI:57945"/>
        <dbReference type="EC" id="1.1.1.51"/>
    </reaction>
    <physiologicalReaction direction="left-to-right" evidence="24">
        <dbReference type="Rhea" id="RHEA:14930"/>
    </physiologicalReaction>
</comment>
<comment type="catalytic activity">
    <reaction evidence="11">
        <text>3alpha-hydroxy-5alpha-androstane 17-O-(beta-D-glucuronate) + NADP(+) = 5alpha-dihydrotestosterone 17-O-(beta-D-glucuronate) + NADPH + H(+)</text>
        <dbReference type="Rhea" id="RHEA:53112"/>
        <dbReference type="ChEBI" id="CHEBI:15378"/>
        <dbReference type="ChEBI" id="CHEBI:57783"/>
        <dbReference type="ChEBI" id="CHEBI:58349"/>
        <dbReference type="ChEBI" id="CHEBI:133519"/>
        <dbReference type="ChEBI" id="CHEBI:136914"/>
    </reaction>
    <physiologicalReaction direction="right-to-left" evidence="26">
        <dbReference type="Rhea" id="RHEA:53114"/>
    </physiologicalReaction>
</comment>
<comment type="catalytic activity">
    <reaction evidence="11">
        <text>(3beta,5alpha,17beta)-3-hydroxy-androstan-17-yl sulfate + NADP(+) = 5alpha-dihydrotestosterone sulfate + NADPH + H(+)</text>
        <dbReference type="Rhea" id="RHEA:53136"/>
        <dbReference type="ChEBI" id="CHEBI:15378"/>
        <dbReference type="ChEBI" id="CHEBI:57783"/>
        <dbReference type="ChEBI" id="CHEBI:58349"/>
        <dbReference type="ChEBI" id="CHEBI:133105"/>
        <dbReference type="ChEBI" id="CHEBI:136982"/>
    </reaction>
    <physiologicalReaction direction="right-to-left" evidence="26">
        <dbReference type="Rhea" id="RHEA:53138"/>
    </physiologicalReaction>
</comment>
<comment type="catalytic activity">
    <reaction evidence="8">
        <text>5alpha-androstane-3alpha,17beta-diol + NAD(+) = androsterone + NADH + H(+)</text>
        <dbReference type="Rhea" id="RHEA:42124"/>
        <dbReference type="ChEBI" id="CHEBI:15378"/>
        <dbReference type="ChEBI" id="CHEBI:16032"/>
        <dbReference type="ChEBI" id="CHEBI:36713"/>
        <dbReference type="ChEBI" id="CHEBI:57540"/>
        <dbReference type="ChEBI" id="CHEBI:57945"/>
    </reaction>
    <physiologicalReaction direction="left-to-right" evidence="25">
        <dbReference type="Rhea" id="RHEA:42125"/>
    </physiologicalReaction>
</comment>
<comment type="catalytic activity">
    <reaction evidence="13">
        <text>chlordecone alcohol + NADP(+) = chlordecone + NADPH + H(+)</text>
        <dbReference type="Rhea" id="RHEA:14401"/>
        <dbReference type="ChEBI" id="CHEBI:15378"/>
        <dbReference type="ChEBI" id="CHEBI:16548"/>
        <dbReference type="ChEBI" id="CHEBI:17184"/>
        <dbReference type="ChEBI" id="CHEBI:57783"/>
        <dbReference type="ChEBI" id="CHEBI:58349"/>
        <dbReference type="EC" id="1.1.1.225"/>
    </reaction>
</comment>
<comment type="activity regulation">
    <text evidence="8">Inhibited by nonsteroidal the anti-inflammatory drugs (NSAID) flufenamic (PubMed:14672942). The oxidation reaction is inhibited by low micromolar concentrations of NADPH (PubMed:14672942).</text>
</comment>
<comment type="biophysicochemical properties">
    <kinetics>
        <KM evidence="6">10.5 uM for 5alpha-androstane-3alpha,17beta-diol</KM>
        <KM evidence="6">8.3 uM for 17beta-hydroxy-5alpha-androstan-3-one</KM>
        <KM evidence="7">0.8 uM for 17beta-hydroxy-5alpha-androstan-3-one</KM>
        <KM evidence="6">1.44 uM for 5alpha-androstan-3,17-dione</KM>
        <KM evidence="6">5.04 uM for 3alpha-hydroxy-5alpha-androstan-17-one...(androsterone)</KM>
        <Vmax evidence="6">55.5 nmol/min/mg enzyme for 5alpha-androstane-3alpha,17beta-diol oxydation</Vmax>
        <Vmax evidence="6">51.9 nmol/min/mg enzyme for 17beta-hydroxy-5alpha-androstan-3-one reduction</Vmax>
        <Vmax evidence="6">55.5 nmol/min/mg enzyme for 5alpha-androstane-3alpha,17beta-diol oxidation</Vmax>
        <Vmax evidence="6">48.4 nmol/min/mg enzyme for 5alpha-androstan-3,17-dione reduction</Vmax>
        <Vmax evidence="6">55.5 nmol/min/mg enzyme for 3alpha-hydroxy-5alpha-androstan-17-one oxydation</Vmax>
        <text evidence="6 11">kcat is 1.99 min(-1) for 17beta-hydroxy-5alpha-androstan-3-one reduction. kcat is 1.79 min(-1) for 5alpha-androstan-3,17-dione reduction. kcat is 2.1 min(-1) for 5alpha-androstane-3alpha,17beta-diol oxydation. kcat is 1.39.1 min(-1) for 3alpha-hydroxy-5alpha-androstan-17-one oxydation (PubMed:10998348). kcat is 2.1 min(-1) for 5alpha-androstane-3alpha,17beta-diol oxydation (PubMed:10998348). kcat is 3.07 min(-1) for 5alpha-dihydrotestosterone sulfate (PubMed:19218247). kcat is 3.28 min(-1) for 5alpha-dihydrotestosterone 17-O-(beta-D-glucuronate) (PubMed:19218247).</text>
    </kinetics>
</comment>
<comment type="pathway">
    <text evidence="8">Steroid metabolism.</text>
</comment>
<comment type="subunit">
    <text evidence="19">Monomer.</text>
</comment>
<comment type="interaction">
    <interactant intactId="EBI-21734635">
        <id>P17516</id>
    </interactant>
    <interactant intactId="EBI-712656">
        <id>P42330</id>
        <label>AKR1C3</label>
    </interactant>
    <organismsDiffer>false</organismsDiffer>
    <experiments>3</experiments>
</comment>
<comment type="interaction">
    <interactant intactId="EBI-21734635">
        <id>P17516</id>
    </interactant>
    <interactant intactId="EBI-6115410">
        <id>Q6UX71</id>
        <label>PLXDC2</label>
    </interactant>
    <organismsDiffer>false</organismsDiffer>
    <experiments>2</experiments>
</comment>
<comment type="subcellular location">
    <subcellularLocation>
        <location evidence="3">Cytoplasm</location>
        <location evidence="3">Cytosol</location>
    </subcellularLocation>
</comment>
<comment type="tissue specificity">
    <text evidence="6 7 16">Liver specific.</text>
</comment>
<comment type="PTM">
    <text>The N-terminus is blocked.</text>
</comment>
<comment type="polymorphism">
    <text evidence="4">The allele with Cys-145/Val-311 shows a three- to five-fold decrease in catalytic efficiency for xenobiotic and steroidal substrates compared to the Ser-145/Leu-311 allele.</text>
</comment>
<comment type="disease" evidence="12">
    <disease id="DI-03279">
        <name>46,XY sex reversal 8</name>
        <acronym>SRXY8</acronym>
        <description>A disorder of sex development. Affected individuals have a 46,XY karyotype but present as phenotypically normal females.</description>
        <dbReference type="MIM" id="614279"/>
    </disease>
    <text evidence="12">The gene represented in this entry may act as a disease modifier. A splicing mutation resulting in loss of AKR1C4 exon 2 has been found in affected individuals carrying a causative mutation in AKR1C2 (PubMed:21802064). These patients manifest a more severe disease phenotype than individuals only carrying mutations in AKR1C2.</text>
</comment>
<comment type="similarity">
    <text evidence="23">Belongs to the aldo/keto reductase family.</text>
</comment>
<comment type="sequence caution" evidence="23">
    <conflict type="erroneous initiation">
        <sequence resource="EMBL-CDS" id="AAA35658"/>
    </conflict>
    <text>Truncated N-terminus.</text>
</comment>